<proteinExistence type="evidence at transcript level"/>
<accession>Q9ESM2</accession>
<keyword id="KW-1015">Disulfide bond</keyword>
<keyword id="KW-0272">Extracellular matrix</keyword>
<keyword id="KW-0373">Hyaluronic acid</keyword>
<keyword id="KW-0393">Immunoglobulin domain</keyword>
<keyword id="KW-1185">Reference proteome</keyword>
<keyword id="KW-0677">Repeat</keyword>
<keyword id="KW-0964">Secreted</keyword>
<keyword id="KW-0732">Signal</keyword>
<protein>
    <recommendedName>
        <fullName>Hyaluronan and proteoglycan link protein 2</fullName>
    </recommendedName>
    <alternativeName>
        <fullName>Brain link protein 1</fullName>
    </alternativeName>
</protein>
<organism>
    <name type="scientific">Rattus norvegicus</name>
    <name type="common">Rat</name>
    <dbReference type="NCBI Taxonomy" id="10116"/>
    <lineage>
        <taxon>Eukaryota</taxon>
        <taxon>Metazoa</taxon>
        <taxon>Chordata</taxon>
        <taxon>Craniata</taxon>
        <taxon>Vertebrata</taxon>
        <taxon>Euteleostomi</taxon>
        <taxon>Mammalia</taxon>
        <taxon>Eutheria</taxon>
        <taxon>Euarchontoglires</taxon>
        <taxon>Glires</taxon>
        <taxon>Rodentia</taxon>
        <taxon>Myomorpha</taxon>
        <taxon>Muroidea</taxon>
        <taxon>Muridae</taxon>
        <taxon>Murinae</taxon>
        <taxon>Rattus</taxon>
    </lineage>
</organism>
<dbReference type="EMBL" id="AB049056">
    <property type="protein sequence ID" value="BAB17664.1"/>
    <property type="molecule type" value="mRNA"/>
</dbReference>
<dbReference type="RefSeq" id="NP_071621.1">
    <property type="nucleotide sequence ID" value="NM_022285.1"/>
</dbReference>
<dbReference type="SMR" id="Q9ESM2"/>
<dbReference type="BioGRID" id="248967">
    <property type="interactions" value="1"/>
</dbReference>
<dbReference type="FunCoup" id="Q9ESM2">
    <property type="interactions" value="339"/>
</dbReference>
<dbReference type="IntAct" id="Q9ESM2">
    <property type="interactions" value="1"/>
</dbReference>
<dbReference type="MINT" id="Q9ESM2"/>
<dbReference type="STRING" id="10116.ENSRNOP00000025624"/>
<dbReference type="PaxDb" id="10116-ENSRNOP00000025624"/>
<dbReference type="ABCD" id="Q9ESM2">
    <property type="antibodies" value="2 sequenced antibodies"/>
</dbReference>
<dbReference type="GeneID" id="64057"/>
<dbReference type="KEGG" id="rno:64057"/>
<dbReference type="UCSC" id="RGD:621854">
    <property type="organism name" value="rat"/>
</dbReference>
<dbReference type="AGR" id="RGD:621854"/>
<dbReference type="CTD" id="60484"/>
<dbReference type="RGD" id="621854">
    <property type="gene designation" value="Hapln2"/>
</dbReference>
<dbReference type="eggNOG" id="ENOG502QV1D">
    <property type="taxonomic scope" value="Eukaryota"/>
</dbReference>
<dbReference type="InParanoid" id="Q9ESM2"/>
<dbReference type="OrthoDB" id="5359219at2759"/>
<dbReference type="PhylomeDB" id="Q9ESM2"/>
<dbReference type="PRO" id="PR:Q9ESM2"/>
<dbReference type="Proteomes" id="UP000002494">
    <property type="component" value="Unplaced"/>
</dbReference>
<dbReference type="GO" id="GO:0031012">
    <property type="term" value="C:extracellular matrix"/>
    <property type="evidence" value="ECO:0000250"/>
    <property type="project" value="UniProtKB"/>
</dbReference>
<dbReference type="GO" id="GO:0005615">
    <property type="term" value="C:extracellular space"/>
    <property type="evidence" value="ECO:0000318"/>
    <property type="project" value="GO_Central"/>
</dbReference>
<dbReference type="GO" id="GO:0033268">
    <property type="term" value="C:node of Ranvier"/>
    <property type="evidence" value="ECO:0000266"/>
    <property type="project" value="RGD"/>
</dbReference>
<dbReference type="GO" id="GO:0072534">
    <property type="term" value="C:perineuronal net"/>
    <property type="evidence" value="ECO:0000318"/>
    <property type="project" value="GO_Central"/>
</dbReference>
<dbReference type="GO" id="GO:0045202">
    <property type="term" value="C:synapse"/>
    <property type="evidence" value="ECO:0000318"/>
    <property type="project" value="GO_Central"/>
</dbReference>
<dbReference type="GO" id="GO:0005540">
    <property type="term" value="F:hyaluronic acid binding"/>
    <property type="evidence" value="ECO:0007669"/>
    <property type="project" value="UniProtKB-KW"/>
</dbReference>
<dbReference type="GO" id="GO:0007155">
    <property type="term" value="P:cell adhesion"/>
    <property type="evidence" value="ECO:0007669"/>
    <property type="project" value="InterPro"/>
</dbReference>
<dbReference type="GO" id="GO:0007417">
    <property type="term" value="P:central nervous system development"/>
    <property type="evidence" value="ECO:0000318"/>
    <property type="project" value="GO_Central"/>
</dbReference>
<dbReference type="GO" id="GO:0008065">
    <property type="term" value="P:establishment of blood-nerve barrier"/>
    <property type="evidence" value="ECO:0000266"/>
    <property type="project" value="RGD"/>
</dbReference>
<dbReference type="GO" id="GO:0085029">
    <property type="term" value="P:extracellular matrix assembly"/>
    <property type="evidence" value="ECO:0000266"/>
    <property type="project" value="RGD"/>
</dbReference>
<dbReference type="GO" id="GO:0001501">
    <property type="term" value="P:skeletal system development"/>
    <property type="evidence" value="ECO:0000318"/>
    <property type="project" value="GO_Central"/>
</dbReference>
<dbReference type="CDD" id="cd03518">
    <property type="entry name" value="Link_domain_HAPLN_module_1"/>
    <property type="match status" value="1"/>
</dbReference>
<dbReference type="CDD" id="cd03519">
    <property type="entry name" value="Link_domain_HAPLN_module_2"/>
    <property type="match status" value="1"/>
</dbReference>
<dbReference type="FunFam" id="2.60.40.10:FF:000846">
    <property type="entry name" value="Hyaluronan and proteoglycan link protein 2"/>
    <property type="match status" value="1"/>
</dbReference>
<dbReference type="FunFam" id="3.10.100.10:FF:000001">
    <property type="entry name" value="Hyaluronan proteoglycan link protein 1"/>
    <property type="match status" value="1"/>
</dbReference>
<dbReference type="FunFam" id="3.10.100.10:FF:000002">
    <property type="entry name" value="Hyaluronan proteoglycan link protein 1"/>
    <property type="match status" value="1"/>
</dbReference>
<dbReference type="Gene3D" id="2.60.40.10">
    <property type="entry name" value="Immunoglobulins"/>
    <property type="match status" value="1"/>
</dbReference>
<dbReference type="Gene3D" id="3.10.100.10">
    <property type="entry name" value="Mannose-Binding Protein A, subunit A"/>
    <property type="match status" value="2"/>
</dbReference>
<dbReference type="InterPro" id="IPR016186">
    <property type="entry name" value="C-type_lectin-like/link_sf"/>
</dbReference>
<dbReference type="InterPro" id="IPR016187">
    <property type="entry name" value="CTDL_fold"/>
</dbReference>
<dbReference type="InterPro" id="IPR050691">
    <property type="entry name" value="Hyaluronan_bind_Proteoglycan"/>
</dbReference>
<dbReference type="InterPro" id="IPR007110">
    <property type="entry name" value="Ig-like_dom"/>
</dbReference>
<dbReference type="InterPro" id="IPR036179">
    <property type="entry name" value="Ig-like_dom_sf"/>
</dbReference>
<dbReference type="InterPro" id="IPR013783">
    <property type="entry name" value="Ig-like_fold"/>
</dbReference>
<dbReference type="InterPro" id="IPR003599">
    <property type="entry name" value="Ig_sub"/>
</dbReference>
<dbReference type="InterPro" id="IPR003598">
    <property type="entry name" value="Ig_sub2"/>
</dbReference>
<dbReference type="InterPro" id="IPR013106">
    <property type="entry name" value="Ig_V-set"/>
</dbReference>
<dbReference type="InterPro" id="IPR000538">
    <property type="entry name" value="Link_dom"/>
</dbReference>
<dbReference type="PANTHER" id="PTHR22804">
    <property type="entry name" value="AGGRECAN/VERSICAN PROTEOGLYCAN"/>
    <property type="match status" value="1"/>
</dbReference>
<dbReference type="PANTHER" id="PTHR22804:SF8">
    <property type="entry name" value="HYALURONAN AND PROTEOGLYCAN LINK PROTEIN 2"/>
    <property type="match status" value="1"/>
</dbReference>
<dbReference type="Pfam" id="PF07686">
    <property type="entry name" value="V-set"/>
    <property type="match status" value="1"/>
</dbReference>
<dbReference type="Pfam" id="PF00193">
    <property type="entry name" value="Xlink"/>
    <property type="match status" value="2"/>
</dbReference>
<dbReference type="PRINTS" id="PR01265">
    <property type="entry name" value="LINKMODULE"/>
</dbReference>
<dbReference type="SMART" id="SM00409">
    <property type="entry name" value="IG"/>
    <property type="match status" value="1"/>
</dbReference>
<dbReference type="SMART" id="SM00408">
    <property type="entry name" value="IGc2"/>
    <property type="match status" value="1"/>
</dbReference>
<dbReference type="SMART" id="SM00406">
    <property type="entry name" value="IGv"/>
    <property type="match status" value="1"/>
</dbReference>
<dbReference type="SMART" id="SM00445">
    <property type="entry name" value="LINK"/>
    <property type="match status" value="2"/>
</dbReference>
<dbReference type="SUPFAM" id="SSF56436">
    <property type="entry name" value="C-type lectin-like"/>
    <property type="match status" value="2"/>
</dbReference>
<dbReference type="SUPFAM" id="SSF48726">
    <property type="entry name" value="Immunoglobulin"/>
    <property type="match status" value="1"/>
</dbReference>
<dbReference type="PROSITE" id="PS50835">
    <property type="entry name" value="IG_LIKE"/>
    <property type="match status" value="1"/>
</dbReference>
<dbReference type="PROSITE" id="PS01241">
    <property type="entry name" value="LINK_1"/>
    <property type="match status" value="2"/>
</dbReference>
<dbReference type="PROSITE" id="PS50963">
    <property type="entry name" value="LINK_2"/>
    <property type="match status" value="2"/>
</dbReference>
<sequence>MPSWIPLPAFCCLLLPWAFTVFHKTLGNPAPHPGPHYLLPPIHEVIHSRRGATATLPCVLGTSPPSYKVRWSKVEPGELRETLILITNGLHARDYGLLGGRASLRRGHRLDASLIIKNVRLEDEGRYRCELINGIEDESVALTLRLEGVVFPYQPSRGRYQFNYFEAKRACEEQDGRLATYSQLYQAWTEGLDWCNAGWLLEGSVRYPVLNARAPCGGHGRPGIRSYGPRDRSRDRYDAFCFTSALAGQVFFVPGRLTLSEAHAVCRRRGAVVAKVGHLYAAWKFSGLDRCDGGWLADGSVRFPITTPRPRCGGLPDPGVRSFGFPRPQQAAYGTYCYAEK</sequence>
<evidence type="ECO:0000250" key="1"/>
<evidence type="ECO:0000250" key="2">
    <source>
        <dbReference type="UniProtKB" id="Q9ESM3"/>
    </source>
</evidence>
<evidence type="ECO:0000255" key="3"/>
<evidence type="ECO:0000255" key="4">
    <source>
        <dbReference type="PROSITE-ProRule" id="PRU00323"/>
    </source>
</evidence>
<evidence type="ECO:0000269" key="5">
    <source>
    </source>
</evidence>
<evidence type="ECO:0000305" key="6"/>
<feature type="signal peptide" evidence="3">
    <location>
        <begin position="1"/>
        <end position="27"/>
    </location>
</feature>
<feature type="chain" id="PRO_0000013189" description="Hyaluronan and proteoglycan link protein 2">
    <location>
        <begin position="28"/>
        <end position="341"/>
    </location>
</feature>
<feature type="domain" description="Ig-like V-type">
    <location>
        <begin position="35"/>
        <end position="143"/>
    </location>
</feature>
<feature type="domain" description="Link 1" evidence="4">
    <location>
        <begin position="149"/>
        <end position="243"/>
    </location>
</feature>
<feature type="domain" description="Link 2" evidence="4">
    <location>
        <begin position="246"/>
        <end position="339"/>
    </location>
</feature>
<feature type="disulfide bond" evidence="1">
    <location>
        <begin position="58"/>
        <end position="129"/>
    </location>
</feature>
<feature type="disulfide bond" evidence="1">
    <location>
        <begin position="171"/>
        <end position="241"/>
    </location>
</feature>
<feature type="disulfide bond" evidence="1">
    <location>
        <begin position="195"/>
        <end position="216"/>
    </location>
</feature>
<feature type="disulfide bond" evidence="1">
    <location>
        <begin position="266"/>
        <end position="337"/>
    </location>
</feature>
<feature type="disulfide bond" evidence="1">
    <location>
        <begin position="291"/>
        <end position="312"/>
    </location>
</feature>
<gene>
    <name type="primary">Hapln2</name>
    <name type="synonym">Bral1</name>
</gene>
<reference key="1">
    <citation type="journal article" date="2000" name="Biochem. Biophys. Res. Commun.">
        <title>The brain link protein-1 (BRAL1): cDNA cloning, genomic structure, and characterization as a novel link protein expressed in adult brain.</title>
        <authorList>
            <person name="Hirakawa S."/>
            <person name="Oohashi T."/>
            <person name="Su W.-D."/>
            <person name="Yoshioka H."/>
            <person name="Murakami T."/>
            <person name="Arata J."/>
            <person name="Ninomiya Y."/>
        </authorList>
    </citation>
    <scope>NUCLEOTIDE SEQUENCE [MRNA]</scope>
    <scope>TISSUE SPECIFICITY</scope>
    <source>
        <tissue>Brain</tissue>
    </source>
</reference>
<name>HPLN2_RAT</name>
<comment type="function">
    <text evidence="2">Mediates a firm binding of versican V2 to hyaluronic acid. May play a pivotal role in the formation of the hyaluronan-associated matrix in the central nervous system (CNS) which facilitates neuronal conduction and general structural stabilization. Binds to hyaluronic acid (By similarity).</text>
</comment>
<comment type="subcellular location">
    <subcellularLocation>
        <location evidence="2">Secreted</location>
        <location evidence="2">Extracellular space</location>
        <location evidence="2">Extracellular matrix</location>
    </subcellularLocation>
</comment>
<comment type="tissue specificity">
    <text evidence="5">Brain.</text>
</comment>
<comment type="similarity">
    <text evidence="6">Belongs to the HAPLN family.</text>
</comment>